<accession>B1J506</accession>
<gene>
    <name evidence="1" type="primary">lpxK</name>
    <name type="ordered locus">PputW619_1511</name>
</gene>
<organism>
    <name type="scientific">Pseudomonas putida (strain W619)</name>
    <dbReference type="NCBI Taxonomy" id="390235"/>
    <lineage>
        <taxon>Bacteria</taxon>
        <taxon>Pseudomonadati</taxon>
        <taxon>Pseudomonadota</taxon>
        <taxon>Gammaproteobacteria</taxon>
        <taxon>Pseudomonadales</taxon>
        <taxon>Pseudomonadaceae</taxon>
        <taxon>Pseudomonas</taxon>
    </lineage>
</organism>
<comment type="function">
    <text evidence="1">Transfers the gamma-phosphate of ATP to the 4'-position of a tetraacyldisaccharide 1-phosphate intermediate (termed DS-1-P) to form tetraacyldisaccharide 1,4'-bis-phosphate (lipid IVA).</text>
</comment>
<comment type="catalytic activity">
    <reaction evidence="1">
        <text>a lipid A disaccharide + ATP = a lipid IVA + ADP + H(+)</text>
        <dbReference type="Rhea" id="RHEA:67840"/>
        <dbReference type="ChEBI" id="CHEBI:15378"/>
        <dbReference type="ChEBI" id="CHEBI:30616"/>
        <dbReference type="ChEBI" id="CHEBI:176343"/>
        <dbReference type="ChEBI" id="CHEBI:176425"/>
        <dbReference type="ChEBI" id="CHEBI:456216"/>
        <dbReference type="EC" id="2.7.1.130"/>
    </reaction>
</comment>
<comment type="pathway">
    <text evidence="1">Glycolipid biosynthesis; lipid IV(A) biosynthesis; lipid IV(A) from (3R)-3-hydroxytetradecanoyl-[acyl-carrier-protein] and UDP-N-acetyl-alpha-D-glucosamine: step 6/6.</text>
</comment>
<comment type="similarity">
    <text evidence="1">Belongs to the LpxK family.</text>
</comment>
<reference key="1">
    <citation type="submission" date="2008-02" db="EMBL/GenBank/DDBJ databases">
        <title>Complete sequence of Pseudomonas putida W619.</title>
        <authorList>
            <person name="Copeland A."/>
            <person name="Lucas S."/>
            <person name="Lapidus A."/>
            <person name="Barry K."/>
            <person name="Detter J.C."/>
            <person name="Glavina del Rio T."/>
            <person name="Dalin E."/>
            <person name="Tice H."/>
            <person name="Pitluck S."/>
            <person name="Chain P."/>
            <person name="Malfatti S."/>
            <person name="Shin M."/>
            <person name="Vergez L."/>
            <person name="Schmutz J."/>
            <person name="Larimer F."/>
            <person name="Land M."/>
            <person name="Hauser L."/>
            <person name="Kyrpides N."/>
            <person name="Kim E."/>
            <person name="Taghavi S."/>
            <person name="Vangronsveld D."/>
            <person name="van der Lelie D."/>
            <person name="Richardson P."/>
        </authorList>
    </citation>
    <scope>NUCLEOTIDE SEQUENCE [LARGE SCALE GENOMIC DNA]</scope>
    <source>
        <strain>W619</strain>
    </source>
</reference>
<sequence>MALADRLLAAWYAGHPALALLRPLEALYRRVVTRKRARFLSGESASYRAPVPVIVVGNITIGGTGKTPMILWLIEHCRRQGLKVGVVSRGYGAEPPRLPWRVEAIQSAEQAGDEPLLIVQRTGVPLMIDPDRSRAVQALLASEPLDLILCDDGMQHYRLARDLELVLIDAARGLGNGRCLPAGPLREPAERLQEVDAVLFNGASADRPEGFAFHLQPSALVNLRTGERRALDFFPAGQRLHAVAGIGNPQRFFNTLLGLNWQPVPHPFADHAQFSAQSLAFSPSLPLVMTEKDAVKCRAFAADDWWYLAVEALPTPAFCGWFDSQLQRLLPGHRTP</sequence>
<keyword id="KW-0067">ATP-binding</keyword>
<keyword id="KW-0418">Kinase</keyword>
<keyword id="KW-0441">Lipid A biosynthesis</keyword>
<keyword id="KW-0444">Lipid biosynthesis</keyword>
<keyword id="KW-0443">Lipid metabolism</keyword>
<keyword id="KW-0547">Nucleotide-binding</keyword>
<keyword id="KW-0808">Transferase</keyword>
<name>LPXK_PSEPW</name>
<evidence type="ECO:0000255" key="1">
    <source>
        <dbReference type="HAMAP-Rule" id="MF_00409"/>
    </source>
</evidence>
<dbReference type="EC" id="2.7.1.130" evidence="1"/>
<dbReference type="EMBL" id="CP000949">
    <property type="protein sequence ID" value="ACA72016.1"/>
    <property type="molecule type" value="Genomic_DNA"/>
</dbReference>
<dbReference type="SMR" id="B1J506"/>
<dbReference type="STRING" id="390235.PputW619_1511"/>
<dbReference type="KEGG" id="ppw:PputW619_1511"/>
<dbReference type="eggNOG" id="COG1663">
    <property type="taxonomic scope" value="Bacteria"/>
</dbReference>
<dbReference type="HOGENOM" id="CLU_038816_2_0_6"/>
<dbReference type="OrthoDB" id="9766423at2"/>
<dbReference type="UniPathway" id="UPA00359">
    <property type="reaction ID" value="UER00482"/>
</dbReference>
<dbReference type="GO" id="GO:0005886">
    <property type="term" value="C:plasma membrane"/>
    <property type="evidence" value="ECO:0007669"/>
    <property type="project" value="TreeGrafter"/>
</dbReference>
<dbReference type="GO" id="GO:0005524">
    <property type="term" value="F:ATP binding"/>
    <property type="evidence" value="ECO:0007669"/>
    <property type="project" value="UniProtKB-UniRule"/>
</dbReference>
<dbReference type="GO" id="GO:0009029">
    <property type="term" value="F:tetraacyldisaccharide 4'-kinase activity"/>
    <property type="evidence" value="ECO:0007669"/>
    <property type="project" value="UniProtKB-UniRule"/>
</dbReference>
<dbReference type="GO" id="GO:0009245">
    <property type="term" value="P:lipid A biosynthetic process"/>
    <property type="evidence" value="ECO:0007669"/>
    <property type="project" value="UniProtKB-UniRule"/>
</dbReference>
<dbReference type="GO" id="GO:0009244">
    <property type="term" value="P:lipopolysaccharide core region biosynthetic process"/>
    <property type="evidence" value="ECO:0007669"/>
    <property type="project" value="TreeGrafter"/>
</dbReference>
<dbReference type="HAMAP" id="MF_00409">
    <property type="entry name" value="LpxK"/>
    <property type="match status" value="1"/>
</dbReference>
<dbReference type="InterPro" id="IPR003758">
    <property type="entry name" value="LpxK"/>
</dbReference>
<dbReference type="InterPro" id="IPR027417">
    <property type="entry name" value="P-loop_NTPase"/>
</dbReference>
<dbReference type="NCBIfam" id="TIGR00682">
    <property type="entry name" value="lpxK"/>
    <property type="match status" value="1"/>
</dbReference>
<dbReference type="PANTHER" id="PTHR42724">
    <property type="entry name" value="TETRAACYLDISACCHARIDE 4'-KINASE"/>
    <property type="match status" value="1"/>
</dbReference>
<dbReference type="PANTHER" id="PTHR42724:SF1">
    <property type="entry name" value="TETRAACYLDISACCHARIDE 4'-KINASE, MITOCHONDRIAL-RELATED"/>
    <property type="match status" value="1"/>
</dbReference>
<dbReference type="Pfam" id="PF02606">
    <property type="entry name" value="LpxK"/>
    <property type="match status" value="1"/>
</dbReference>
<dbReference type="SUPFAM" id="SSF52540">
    <property type="entry name" value="P-loop containing nucleoside triphosphate hydrolases"/>
    <property type="match status" value="1"/>
</dbReference>
<protein>
    <recommendedName>
        <fullName evidence="1">Tetraacyldisaccharide 4'-kinase</fullName>
        <ecNumber evidence="1">2.7.1.130</ecNumber>
    </recommendedName>
    <alternativeName>
        <fullName evidence="1">Lipid A 4'-kinase</fullName>
    </alternativeName>
</protein>
<feature type="chain" id="PRO_0000340852" description="Tetraacyldisaccharide 4'-kinase">
    <location>
        <begin position="1"/>
        <end position="336"/>
    </location>
</feature>
<feature type="binding site" evidence="1">
    <location>
        <begin position="60"/>
        <end position="67"/>
    </location>
    <ligand>
        <name>ATP</name>
        <dbReference type="ChEBI" id="CHEBI:30616"/>
    </ligand>
</feature>
<proteinExistence type="inferred from homology"/>